<feature type="chain" id="PRO_0000077281" description="Type II restriction enzyme BamHI">
    <location>
        <begin position="1"/>
        <end position="213"/>
    </location>
</feature>
<feature type="active site" description="Proton acceptor" evidence="8">
    <location>
        <position position="113"/>
    </location>
</feature>
<feature type="binding site" evidence="8 9">
    <location>
        <position position="77"/>
    </location>
    <ligand>
        <name>Mg(2+)</name>
        <dbReference type="ChEBI" id="CHEBI:18420"/>
        <label>2</label>
    </ligand>
</feature>
<feature type="binding site" evidence="8 9">
    <location>
        <position position="94"/>
    </location>
    <ligand>
        <name>Mg(2+)</name>
        <dbReference type="ChEBI" id="CHEBI:18420"/>
        <label>1</label>
    </ligand>
</feature>
<feature type="binding site" evidence="8 9">
    <location>
        <position position="94"/>
    </location>
    <ligand>
        <name>Mg(2+)</name>
        <dbReference type="ChEBI" id="CHEBI:18420"/>
        <label>2</label>
    </ligand>
</feature>
<feature type="binding site" evidence="8 9">
    <location>
        <position position="111"/>
    </location>
    <ligand>
        <name>Mg(2+)</name>
        <dbReference type="ChEBI" id="CHEBI:18420"/>
        <label>1</label>
    </ligand>
</feature>
<feature type="binding site" evidence="8 9">
    <location>
        <position position="112"/>
    </location>
    <ligand>
        <name>Mg(2+)</name>
        <dbReference type="ChEBI" id="CHEBI:18420"/>
        <label>1</label>
    </ligand>
</feature>
<feature type="strand" evidence="12">
    <location>
        <begin position="2"/>
        <end position="8"/>
    </location>
</feature>
<feature type="helix" evidence="12">
    <location>
        <begin position="10"/>
        <end position="18"/>
    </location>
</feature>
<feature type="helix" evidence="12">
    <location>
        <begin position="20"/>
        <end position="34"/>
    </location>
</feature>
<feature type="strand" evidence="12">
    <location>
        <begin position="43"/>
        <end position="48"/>
    </location>
</feature>
<feature type="helix" evidence="12">
    <location>
        <begin position="58"/>
        <end position="61"/>
    </location>
</feature>
<feature type="helix" evidence="12">
    <location>
        <begin position="62"/>
        <end position="70"/>
    </location>
</feature>
<feature type="strand" evidence="12">
    <location>
        <begin position="75"/>
        <end position="78"/>
    </location>
</feature>
<feature type="helix" evidence="12">
    <location>
        <begin position="81"/>
        <end position="84"/>
    </location>
</feature>
<feature type="strand" evidence="11">
    <location>
        <begin position="87"/>
        <end position="89"/>
    </location>
</feature>
<feature type="strand" evidence="12">
    <location>
        <begin position="93"/>
        <end position="101"/>
    </location>
</feature>
<feature type="strand" evidence="12">
    <location>
        <begin position="104"/>
        <end position="112"/>
    </location>
</feature>
<feature type="helix" evidence="12">
    <location>
        <begin position="117"/>
        <end position="132"/>
    </location>
</feature>
<feature type="strand" evidence="12">
    <location>
        <begin position="137"/>
        <end position="144"/>
    </location>
</feature>
<feature type="helix" evidence="12">
    <location>
        <begin position="146"/>
        <end position="149"/>
    </location>
</feature>
<feature type="helix" evidence="12">
    <location>
        <begin position="159"/>
        <end position="162"/>
    </location>
</feature>
<feature type="helix" evidence="12">
    <location>
        <begin position="163"/>
        <end position="169"/>
    </location>
</feature>
<feature type="strand" evidence="12">
    <location>
        <begin position="174"/>
        <end position="180"/>
    </location>
</feature>
<feature type="strand" evidence="12">
    <location>
        <begin position="182"/>
        <end position="185"/>
    </location>
</feature>
<feature type="helix" evidence="11">
    <location>
        <begin position="200"/>
        <end position="205"/>
    </location>
</feature>
<protein>
    <recommendedName>
        <fullName evidence="4">Type II restriction enzyme BamHI</fullName>
        <shortName evidence="5">R.BamHI</shortName>
        <ecNumber evidence="1 3">3.1.21.4</ecNumber>
    </recommendedName>
    <alternativeName>
        <fullName>Endonuclease BamHI</fullName>
    </alternativeName>
    <alternativeName>
        <fullName>Type-2 restriction enzyme BamHI</fullName>
    </alternativeName>
</protein>
<proteinExistence type="evidence at protein level"/>
<organism>
    <name type="scientific">Bacillus amyloliquefaciens</name>
    <name type="common">Bacillus velezensis</name>
    <dbReference type="NCBI Taxonomy" id="1390"/>
    <lineage>
        <taxon>Bacteria</taxon>
        <taxon>Bacillati</taxon>
        <taxon>Bacillota</taxon>
        <taxon>Bacilli</taxon>
        <taxon>Bacillales</taxon>
        <taxon>Bacillaceae</taxon>
        <taxon>Bacillus</taxon>
        <taxon>Bacillus amyloliquefaciens group</taxon>
    </lineage>
</organism>
<sequence>MEVEKEFITDEAKELLSKDKLIQQAYNEVKTSICSPIWPATSKTFTINNTEKNCNGVVPIKELCYTLLEDTYNWYREKPLDILKLEKKKGGPIDVYKEFIENSELKRVGMEFETGNISSAHRSMNKLLLGLKHGEIDLAIILMPIKQLAYYLTDRVTNFEELEPYFELTEGQPFIFIGFNAEAYNSNVPLIPKGSDGMSKRSIKKWKDKVENK</sequence>
<evidence type="ECO:0000269" key="1">
    <source>
    </source>
</evidence>
<evidence type="ECO:0000269" key="2">
    <source>
    </source>
</evidence>
<evidence type="ECO:0000269" key="3">
    <source>
    </source>
</evidence>
<evidence type="ECO:0000303" key="4">
    <source>
    </source>
</evidence>
<evidence type="ECO:0000303" key="5">
    <source>
    </source>
</evidence>
<evidence type="ECO:0000305" key="6">
    <source>
    </source>
</evidence>
<evidence type="ECO:0000305" key="7">
    <source>
    </source>
</evidence>
<evidence type="ECO:0000305" key="8">
    <source>
    </source>
</evidence>
<evidence type="ECO:0007744" key="9">
    <source>
        <dbReference type="PDB" id="2BAM"/>
    </source>
</evidence>
<evidence type="ECO:0007744" key="10">
    <source>
        <dbReference type="PDB" id="3BAM"/>
    </source>
</evidence>
<evidence type="ECO:0007829" key="11">
    <source>
        <dbReference type="PDB" id="1ESG"/>
    </source>
</evidence>
<evidence type="ECO:0007829" key="12">
    <source>
        <dbReference type="PDB" id="3BAM"/>
    </source>
</evidence>
<keyword id="KW-0002">3D-structure</keyword>
<keyword id="KW-0903">Direct protein sequencing</keyword>
<keyword id="KW-0255">Endonuclease</keyword>
<keyword id="KW-0378">Hydrolase</keyword>
<keyword id="KW-0460">Magnesium</keyword>
<keyword id="KW-0479">Metal-binding</keyword>
<keyword id="KW-0540">Nuclease</keyword>
<keyword id="KW-0680">Restriction system</keyword>
<comment type="function">
    <text evidence="3 4 6 7">A P subtype restriction enzyme that recognizes the double-stranded sequence 5'-GGATCC-3' and cleaves after G-1.</text>
</comment>
<comment type="catalytic activity">
    <reaction evidence="1 3">
        <text>Endonucleolytic cleavage of DNA to give specific double-stranded fragments with terminal 5'-phosphates.</text>
        <dbReference type="EC" id="3.1.21.4"/>
    </reaction>
</comment>
<comment type="cofactor">
    <cofactor evidence="8">
        <name>Mg(2+)</name>
        <dbReference type="ChEBI" id="CHEBI:18420"/>
    </cofactor>
    <text evidence="8">Binds 2 magnesium ions per subunit.</text>
</comment>
<comment type="subunit">
    <text>Homodimer.</text>
</comment>
<comment type="miscellaneous">
    <text evidence="2">The protein sequnce was determined following expression in E.coli.</text>
</comment>
<dbReference type="EC" id="3.1.21.4" evidence="1 3"/>
<dbReference type="EMBL" id="X55285">
    <property type="protein sequence ID" value="CAA38999.1"/>
    <property type="molecule type" value="Genomic_DNA"/>
</dbReference>
<dbReference type="PIR" id="A38693">
    <property type="entry name" value="A38693"/>
</dbReference>
<dbReference type="PIR" id="S26844">
    <property type="entry name" value="S26844"/>
</dbReference>
<dbReference type="RefSeq" id="WP_013353547.1">
    <property type="nucleotide sequence ID" value="NZ_VRTX01000001.1"/>
</dbReference>
<dbReference type="PDB" id="1BAM">
    <property type="method" value="X-ray"/>
    <property type="resolution" value="1.95 A"/>
    <property type="chains" value="A=1-213"/>
</dbReference>
<dbReference type="PDB" id="1BHM">
    <property type="method" value="X-ray"/>
    <property type="resolution" value="2.20 A"/>
    <property type="chains" value="A/B=1-213"/>
</dbReference>
<dbReference type="PDB" id="1ESG">
    <property type="method" value="X-ray"/>
    <property type="resolution" value="1.90 A"/>
    <property type="chains" value="A/B=1-213"/>
</dbReference>
<dbReference type="PDB" id="2BAM">
    <property type="method" value="X-ray"/>
    <property type="resolution" value="2.00 A"/>
    <property type="chains" value="A/B=1-213"/>
</dbReference>
<dbReference type="PDB" id="3BAM">
    <property type="method" value="X-ray"/>
    <property type="resolution" value="1.80 A"/>
    <property type="chains" value="A/B=1-213"/>
</dbReference>
<dbReference type="PDBsum" id="1BAM"/>
<dbReference type="PDBsum" id="1BHM"/>
<dbReference type="PDBsum" id="1ESG"/>
<dbReference type="PDBsum" id="2BAM"/>
<dbReference type="PDBsum" id="3BAM"/>
<dbReference type="SMR" id="P23940"/>
<dbReference type="BindingDB" id="P23940"/>
<dbReference type="ChEMBL" id="CHEMBL5928"/>
<dbReference type="REBASE" id="185">
    <property type="entry name" value="BamHI"/>
</dbReference>
<dbReference type="REBASE" id="203435">
    <property type="entry name" value="Bam1267ORF3424P"/>
</dbReference>
<dbReference type="OrthoDB" id="571572at2"/>
<dbReference type="BRENDA" id="3.1.21.4">
    <property type="organism ID" value="630"/>
</dbReference>
<dbReference type="EvolutionaryTrace" id="P23940"/>
<dbReference type="PRO" id="PR:P23940"/>
<dbReference type="GO" id="GO:0003677">
    <property type="term" value="F:DNA binding"/>
    <property type="evidence" value="ECO:0007669"/>
    <property type="project" value="InterPro"/>
</dbReference>
<dbReference type="GO" id="GO:0000287">
    <property type="term" value="F:magnesium ion binding"/>
    <property type="evidence" value="ECO:0007669"/>
    <property type="project" value="InterPro"/>
</dbReference>
<dbReference type="GO" id="GO:0009036">
    <property type="term" value="F:type II site-specific deoxyribonuclease activity"/>
    <property type="evidence" value="ECO:0007669"/>
    <property type="project" value="UniProtKB-EC"/>
</dbReference>
<dbReference type="GO" id="GO:0009307">
    <property type="term" value="P:DNA restriction-modification system"/>
    <property type="evidence" value="ECO:0007669"/>
    <property type="project" value="UniProtKB-KW"/>
</dbReference>
<dbReference type="CDD" id="cd00942">
    <property type="entry name" value="BamHI-like"/>
    <property type="match status" value="1"/>
</dbReference>
<dbReference type="Gene3D" id="3.40.91.20">
    <property type="match status" value="1"/>
</dbReference>
<dbReference type="InterPro" id="IPR011338">
    <property type="entry name" value="BamHI/BglII/BstY"/>
</dbReference>
<dbReference type="InterPro" id="IPR011335">
    <property type="entry name" value="Restrct_endonuc-II-like"/>
</dbReference>
<dbReference type="InterPro" id="IPR004194">
    <property type="entry name" value="Restrct_endonuc_II_BamHI"/>
</dbReference>
<dbReference type="Pfam" id="PF02923">
    <property type="entry name" value="BamHI"/>
    <property type="match status" value="1"/>
</dbReference>
<dbReference type="PIRSF" id="PIRSF009309">
    <property type="entry name" value="Restrict_endonuc_II_BamHI"/>
    <property type="match status" value="1"/>
</dbReference>
<dbReference type="SUPFAM" id="SSF52980">
    <property type="entry name" value="Restriction endonuclease-like"/>
    <property type="match status" value="1"/>
</dbReference>
<gene>
    <name evidence="5" type="primary">bamHIR</name>
</gene>
<name>T2BA_BACAM</name>
<accession>P23940</accession>
<reference key="1">
    <citation type="journal article" date="1991" name="Nucleic Acids Res.">
        <title>Characterization of the cloned BamHI restriction modification system: its nucleotide sequence, properties of the methylase, and expression in heterologous hosts.</title>
        <authorList>
            <person name="Brooks J.E."/>
            <person name="Nathan P.D."/>
            <person name="Landry D."/>
            <person name="Sznyter L.A."/>
            <person name="White-Rees P."/>
            <person name="Ives C.L."/>
            <person name="Moran L.S."/>
            <person name="Slatko B.E."/>
            <person name="Benner J.S."/>
        </authorList>
    </citation>
    <scope>NUCLEOTIDE SEQUENCE [GENOMIC DNA]</scope>
    <scope>PROTEIN SEQUENCE OF 1-14</scope>
    <scope>FUNCTION</scope>
    <source>
        <strain>ATCC 49763 / H</strain>
    </source>
</reference>
<reference key="2">
    <citation type="journal article" date="1975" name="J. Mol. Biol.">
        <title>Isolation of a sequence-specific endonuclease (BamI) from Bacillus amyloliquefaciens H.</title>
        <authorList>
            <person name="Wilson G.A."/>
            <person name="Young F.E."/>
        </authorList>
    </citation>
    <scope>FUNCTION AS AN ENDONUCLEASE</scope>
    <scope>CATALYTIC ACTIVITY</scope>
    <source>
        <strain>ATCC 49763 / H / RUB500</strain>
    </source>
</reference>
<reference key="3">
    <citation type="journal article" date="1977" name="Nature">
        <title>Recognition sequence of specific endonuclease BamH.I from Bacillus amyloliquefaciens H.</title>
        <authorList>
            <person name="Roberts R.J."/>
            <person name="Wilson G.A."/>
            <person name="Young F.E."/>
        </authorList>
    </citation>
    <scope>FUNCTION</scope>
    <scope>SUBSTRATE SPECIFICITY</scope>
    <scope>CATALYTIC ACTIVITY</scope>
    <source>
        <strain>ATCC 49763 / H</strain>
    </source>
</reference>
<reference key="4">
    <citation type="journal article" date="2003" name="Nucleic Acids Res.">
        <title>A nomenclature for restriction enzymes, DNA methyltransferases, homing endonucleases and their genes.</title>
        <authorList>
            <person name="Roberts R.J."/>
            <person name="Belfort M."/>
            <person name="Bestor T."/>
            <person name="Bhagwat A.S."/>
            <person name="Bickle T.A."/>
            <person name="Bitinaite J."/>
            <person name="Blumenthal R.M."/>
            <person name="Degtyarev S.K."/>
            <person name="Dryden D.T."/>
            <person name="Dybvig K."/>
            <person name="Firman K."/>
            <person name="Gromova E.S."/>
            <person name="Gumport R.I."/>
            <person name="Halford S.E."/>
            <person name="Hattman S."/>
            <person name="Heitman J."/>
            <person name="Hornby D.P."/>
            <person name="Janulaitis A."/>
            <person name="Jeltsch A."/>
            <person name="Josephsen J."/>
            <person name="Kiss A."/>
            <person name="Klaenhammer T.R."/>
            <person name="Kobayashi I."/>
            <person name="Kong H."/>
            <person name="Krueger D.H."/>
            <person name="Lacks S."/>
            <person name="Marinus M.G."/>
            <person name="Miyahara M."/>
            <person name="Morgan R.D."/>
            <person name="Murray N.E."/>
            <person name="Nagaraja V."/>
            <person name="Piekarowicz A."/>
            <person name="Pingoud A."/>
            <person name="Raleigh E."/>
            <person name="Rao D.N."/>
            <person name="Reich N."/>
            <person name="Repin V.E."/>
            <person name="Selker E.U."/>
            <person name="Shaw P.C."/>
            <person name="Stein D.C."/>
            <person name="Stoddard B.L."/>
            <person name="Szybalski W."/>
            <person name="Trautner T.A."/>
            <person name="Van Etten J.L."/>
            <person name="Vitor J.M."/>
            <person name="Wilson G.G."/>
            <person name="Xu S.Y."/>
        </authorList>
    </citation>
    <scope>NOMENCLATURE</scope>
    <scope>SUBTYPE</scope>
</reference>
<reference key="5">
    <citation type="journal article" date="1994" name="Nature">
        <title>Structure of restriction endonuclease BamHI and its relationship to EcoRI.</title>
        <authorList>
            <person name="Newman M."/>
            <person name="Strzelecka T."/>
            <person name="Dorner L.F."/>
            <person name="Schildkraut I."/>
            <person name="Aggarwal A.K."/>
        </authorList>
    </citation>
    <scope>X-RAY CRYSTALLOGRAPHY (1.95 ANGSTROMS)</scope>
</reference>
<reference evidence="9 10" key="6">
    <citation type="journal article" date="1998" name="Nat. Struct. Biol.">
        <title>The role of metals in catalysis by the restriction endonuclease BamHI.</title>
        <authorList>
            <person name="Viadiu H."/>
            <person name="Aggarwal A.K."/>
        </authorList>
    </citation>
    <scope>X-RAY CRYSTALLOGRAPHY (1.8 ANGSTROMS) IN COMPLEX WITH CA(2+) AND MN(2+)</scope>
    <scope>COFACTOR</scope>
    <scope>REACTION MECHANISM</scope>
    <scope>ACTIVE SITE</scope>
</reference>